<keyword id="KW-0044">Antibiotic</keyword>
<keyword id="KW-0929">Antimicrobial</keyword>
<keyword id="KW-0903">Direct protein sequencing</keyword>
<name>OLVTN_PHONI</name>
<comment type="function">
    <text evidence="1">Has weak antibacterial activity against Gram-positive bacteria M.luteus A270 (MIC=47.2-94.5 uM), S.aureus ATCC 29213 (MIC=94.5-188.9 uM) and S.epidermidis ATCC 12228 (MIC=94.5-188.9 uM) as well as against Gram-negative bacterium S.marcescens ATCC 4112 (MIC=23.5-47.2 uM). Also active against yeast C.albicans MDM8 (MIC=94.5-188.9 uM). Has no activity against Gram-negative bacteria E.coli ATCC 25922, E.coli SBS363 and P.aeruginosa ATCC 27853 or against clinical isolates of C.albicans, C.krusei, C.glabrata, C.parapsilosis, C.tropicalis, C.guilliermondii or Trichosporon sp.</text>
</comment>
<comment type="tissue specificity">
    <text evidence="1">Expressed in egg (at protein level).</text>
</comment>
<comment type="mass spectrometry"/>
<comment type="miscellaneous">
    <text evidence="4">Possibly derived from Nedd4 E3 ubiquitin ligase.</text>
</comment>
<dbReference type="GO" id="GO:0042742">
    <property type="term" value="P:defense response to bacterium"/>
    <property type="evidence" value="ECO:0007669"/>
    <property type="project" value="UniProtKB-KW"/>
</dbReference>
<feature type="peptide" id="PRO_0000420435" description="Oligoventin" evidence="1">
    <location>
        <begin position="1"/>
        <end position="8"/>
    </location>
</feature>
<proteinExistence type="evidence at protein level"/>
<evidence type="ECO:0000269" key="1">
    <source>
    </source>
</evidence>
<evidence type="ECO:0000303" key="2">
    <source>
    </source>
</evidence>
<evidence type="ECO:0000305" key="3"/>
<evidence type="ECO:0000305" key="4">
    <source>
    </source>
</evidence>
<sequence>QPFSLERW</sequence>
<organism>
    <name type="scientific">Phoneutria nigriventer</name>
    <name type="common">Brazilian armed spider</name>
    <name type="synonym">Ctenus nigriventer</name>
    <dbReference type="NCBI Taxonomy" id="6918"/>
    <lineage>
        <taxon>Eukaryota</taxon>
        <taxon>Metazoa</taxon>
        <taxon>Ecdysozoa</taxon>
        <taxon>Arthropoda</taxon>
        <taxon>Chelicerata</taxon>
        <taxon>Arachnida</taxon>
        <taxon>Araneae</taxon>
        <taxon>Araneomorphae</taxon>
        <taxon>Entelegynae</taxon>
        <taxon>Lycosoidea</taxon>
        <taxon>Ctenidae</taxon>
        <taxon>Phoneutria</taxon>
    </lineage>
</organism>
<accession>B3EWR9</accession>
<protein>
    <recommendedName>
        <fullName evidence="2">Oligoventin</fullName>
    </recommendedName>
</protein>
<reference evidence="3" key="1">
    <citation type="journal article" date="2016" name="Front. Immunol.">
        <title>Evidence of an Antimicrobial Peptide Signature Encrypted in HECT E3 Ubiquitin Ligases.</title>
        <authorList>
            <person name="Candido-Ferreira I.L."/>
            <person name="Kronenberger T."/>
            <person name="Sayegh R.S."/>
            <person name="Batista I.F."/>
            <person name="da Silva Junior P.I."/>
        </authorList>
    </citation>
    <scope>PROTEIN SEQUENCE</scope>
    <scope>FUNCTION</scope>
    <scope>TISSUE SPECIFICITY</scope>
    <scope>MASS SPECTROMETRY</scope>
    <source>
        <tissue evidence="1">Egg</tissue>
    </source>
</reference>